<keyword id="KW-0997">Cell inner membrane</keyword>
<keyword id="KW-1003">Cell membrane</keyword>
<keyword id="KW-0472">Membrane</keyword>
<keyword id="KW-0808">Transferase</keyword>
<keyword id="KW-0812">Transmembrane</keyword>
<keyword id="KW-1133">Transmembrane helix</keyword>
<sequence>MIIHPNFDPVAIHLGPLAVRWYGLMYLVGFIAAIVVGRIRLKLPYVAAQGWTAKDIDDMMFYGVLGTVLGGRLGYVLFYKADFYFSHPLDVFKVWEGGMSFHGGFLGVTLAMMLFAWQRKRHWLQVTDFVAPMVPLGLAAGRLGNFINGELWGRVTDPTAPWAMLFPGAMRDDAAWLPKHPELVEKWHLADVFMQYQMLPRHPSQLYEIALEGIALFFVLFLFARKPRPMGAISALFLIGYGLARFTVEFAREPDDFLGLLALGLSMGQWLSLPMILAGIAMMVWAYRRRAANAAA</sequence>
<dbReference type="EC" id="2.5.1.145" evidence="1"/>
<dbReference type="EMBL" id="CP000378">
    <property type="protein sequence ID" value="ABF76752.1"/>
    <property type="molecule type" value="Genomic_DNA"/>
</dbReference>
<dbReference type="SMR" id="Q1BUF3"/>
<dbReference type="HOGENOM" id="CLU_013386_1_0_4"/>
<dbReference type="UniPathway" id="UPA00664"/>
<dbReference type="GO" id="GO:0005886">
    <property type="term" value="C:plasma membrane"/>
    <property type="evidence" value="ECO:0007669"/>
    <property type="project" value="UniProtKB-SubCell"/>
</dbReference>
<dbReference type="GO" id="GO:0008961">
    <property type="term" value="F:phosphatidylglycerol-prolipoprotein diacylglyceryl transferase activity"/>
    <property type="evidence" value="ECO:0007669"/>
    <property type="project" value="UniProtKB-UniRule"/>
</dbReference>
<dbReference type="GO" id="GO:0042158">
    <property type="term" value="P:lipoprotein biosynthetic process"/>
    <property type="evidence" value="ECO:0007669"/>
    <property type="project" value="UniProtKB-UniRule"/>
</dbReference>
<dbReference type="HAMAP" id="MF_01147">
    <property type="entry name" value="Lgt"/>
    <property type="match status" value="1"/>
</dbReference>
<dbReference type="InterPro" id="IPR001640">
    <property type="entry name" value="Lgt"/>
</dbReference>
<dbReference type="NCBIfam" id="TIGR00544">
    <property type="entry name" value="lgt"/>
    <property type="match status" value="1"/>
</dbReference>
<dbReference type="PANTHER" id="PTHR30589:SF0">
    <property type="entry name" value="PHOSPHATIDYLGLYCEROL--PROLIPOPROTEIN DIACYLGLYCERYL TRANSFERASE"/>
    <property type="match status" value="1"/>
</dbReference>
<dbReference type="PANTHER" id="PTHR30589">
    <property type="entry name" value="PROLIPOPROTEIN DIACYLGLYCERYL TRANSFERASE"/>
    <property type="match status" value="1"/>
</dbReference>
<dbReference type="Pfam" id="PF01790">
    <property type="entry name" value="LGT"/>
    <property type="match status" value="1"/>
</dbReference>
<dbReference type="PROSITE" id="PS01311">
    <property type="entry name" value="LGT"/>
    <property type="match status" value="1"/>
</dbReference>
<organism>
    <name type="scientific">Burkholderia orbicola (strain AU 1054)</name>
    <dbReference type="NCBI Taxonomy" id="331271"/>
    <lineage>
        <taxon>Bacteria</taxon>
        <taxon>Pseudomonadati</taxon>
        <taxon>Pseudomonadota</taxon>
        <taxon>Betaproteobacteria</taxon>
        <taxon>Burkholderiales</taxon>
        <taxon>Burkholderiaceae</taxon>
        <taxon>Burkholderia</taxon>
        <taxon>Burkholderia cepacia complex</taxon>
        <taxon>Burkholderia orbicola</taxon>
    </lineage>
</organism>
<gene>
    <name evidence="1" type="primary">lgt</name>
    <name type="ordered locus">Bcen_1849</name>
</gene>
<proteinExistence type="inferred from homology"/>
<name>LGT_BURO1</name>
<comment type="function">
    <text evidence="1">Catalyzes the transfer of the diacylglyceryl group from phosphatidylglycerol to the sulfhydryl group of the N-terminal cysteine of a prolipoprotein, the first step in the formation of mature lipoproteins.</text>
</comment>
<comment type="catalytic activity">
    <reaction evidence="1">
        <text>L-cysteinyl-[prolipoprotein] + a 1,2-diacyl-sn-glycero-3-phospho-(1'-sn-glycerol) = an S-1,2-diacyl-sn-glyceryl-L-cysteinyl-[prolipoprotein] + sn-glycerol 1-phosphate + H(+)</text>
        <dbReference type="Rhea" id="RHEA:56712"/>
        <dbReference type="Rhea" id="RHEA-COMP:14679"/>
        <dbReference type="Rhea" id="RHEA-COMP:14680"/>
        <dbReference type="ChEBI" id="CHEBI:15378"/>
        <dbReference type="ChEBI" id="CHEBI:29950"/>
        <dbReference type="ChEBI" id="CHEBI:57685"/>
        <dbReference type="ChEBI" id="CHEBI:64716"/>
        <dbReference type="ChEBI" id="CHEBI:140658"/>
        <dbReference type="EC" id="2.5.1.145"/>
    </reaction>
</comment>
<comment type="pathway">
    <text evidence="1">Protein modification; lipoprotein biosynthesis (diacylglyceryl transfer).</text>
</comment>
<comment type="subcellular location">
    <subcellularLocation>
        <location evidence="1">Cell inner membrane</location>
        <topology evidence="1">Multi-pass membrane protein</topology>
    </subcellularLocation>
</comment>
<comment type="similarity">
    <text evidence="1">Belongs to the Lgt family.</text>
</comment>
<accession>Q1BUF3</accession>
<reference key="1">
    <citation type="submission" date="2006-05" db="EMBL/GenBank/DDBJ databases">
        <title>Complete sequence of chromosome 1 of Burkholderia cenocepacia AU 1054.</title>
        <authorList>
            <consortium name="US DOE Joint Genome Institute"/>
            <person name="Copeland A."/>
            <person name="Lucas S."/>
            <person name="Lapidus A."/>
            <person name="Barry K."/>
            <person name="Detter J.C."/>
            <person name="Glavina del Rio T."/>
            <person name="Hammon N."/>
            <person name="Israni S."/>
            <person name="Dalin E."/>
            <person name="Tice H."/>
            <person name="Pitluck S."/>
            <person name="Chain P."/>
            <person name="Malfatti S."/>
            <person name="Shin M."/>
            <person name="Vergez L."/>
            <person name="Schmutz J."/>
            <person name="Larimer F."/>
            <person name="Land M."/>
            <person name="Hauser L."/>
            <person name="Kyrpides N."/>
            <person name="Lykidis A."/>
            <person name="LiPuma J.J."/>
            <person name="Konstantinidis K."/>
            <person name="Tiedje J.M."/>
            <person name="Richardson P."/>
        </authorList>
    </citation>
    <scope>NUCLEOTIDE SEQUENCE [LARGE SCALE GENOMIC DNA]</scope>
    <source>
        <strain>AU 1054</strain>
    </source>
</reference>
<evidence type="ECO:0000255" key="1">
    <source>
        <dbReference type="HAMAP-Rule" id="MF_01147"/>
    </source>
</evidence>
<protein>
    <recommendedName>
        <fullName evidence="1">Phosphatidylglycerol--prolipoprotein diacylglyceryl transferase</fullName>
        <ecNumber evidence="1">2.5.1.145</ecNumber>
    </recommendedName>
</protein>
<feature type="chain" id="PRO_1000053396" description="Phosphatidylglycerol--prolipoprotein diacylglyceryl transferase">
    <location>
        <begin position="1"/>
        <end position="296"/>
    </location>
</feature>
<feature type="transmembrane region" description="Helical" evidence="1">
    <location>
        <begin position="17"/>
        <end position="37"/>
    </location>
</feature>
<feature type="transmembrane region" description="Helical" evidence="1">
    <location>
        <begin position="59"/>
        <end position="79"/>
    </location>
</feature>
<feature type="transmembrane region" description="Helical" evidence="1">
    <location>
        <begin position="97"/>
        <end position="117"/>
    </location>
</feature>
<feature type="transmembrane region" description="Helical" evidence="1">
    <location>
        <begin position="129"/>
        <end position="149"/>
    </location>
</feature>
<feature type="transmembrane region" description="Helical" evidence="1">
    <location>
        <begin position="204"/>
        <end position="224"/>
    </location>
</feature>
<feature type="transmembrane region" description="Helical" evidence="1">
    <location>
        <begin position="230"/>
        <end position="250"/>
    </location>
</feature>
<feature type="transmembrane region" description="Helical" evidence="1">
    <location>
        <begin position="257"/>
        <end position="277"/>
    </location>
</feature>
<feature type="binding site" evidence="1">
    <location>
        <position position="142"/>
    </location>
    <ligand>
        <name>a 1,2-diacyl-sn-glycero-3-phospho-(1'-sn-glycerol)</name>
        <dbReference type="ChEBI" id="CHEBI:64716"/>
    </ligand>
</feature>